<organism evidence="2">
    <name type="scientific">Weissella confusa</name>
    <name type="common">Lactobacillus confusus</name>
    <dbReference type="NCBI Taxonomy" id="1583"/>
    <lineage>
        <taxon>Bacteria</taxon>
        <taxon>Bacillati</taxon>
        <taxon>Bacillota</taxon>
        <taxon>Bacilli</taxon>
        <taxon>Lactobacillales</taxon>
        <taxon>Lactobacillaceae</taxon>
        <taxon>Weissella</taxon>
    </lineage>
</organism>
<reference evidence="3" key="1">
    <citation type="journal article" date="2018" name="IOSR J. Pharm. Biol. Sci.">
        <title>Purification and characterization of an antibacterial peptide (Bacteriocin) produced by Weissella confusa AJ79.</title>
        <authorList>
            <person name="Dubey A.K."/>
            <person name="Kadirvelu J."/>
        </authorList>
    </citation>
    <scope>PROTEIN SEQUENCE</scope>
    <scope>IDENTIFICATION BY MASS SPECTROMETRY</scope>
    <scope>FUNCTION</scope>
    <scope>BIOPHYSICOCHEMICAL PROPERTIES</scope>
    <source>
        <strain evidence="2">AJ79</strain>
    </source>
</reference>
<protein>
    <recommendedName>
        <fullName evidence="2">Bacteriocin BAC79</fullName>
    </recommendedName>
</protein>
<evidence type="ECO:0000269" key="1">
    <source ref="1"/>
</evidence>
<evidence type="ECO:0000303" key="2">
    <source ref="1"/>
</evidence>
<evidence type="ECO:0000305" key="3"/>
<name>BAC79_WEICO</name>
<comment type="function">
    <text evidence="1">Has antibacterial activity against a wide spectrum of Gram-positive and Gram-negative bacteria, including L.monocytogenes which is inhibited through disruption of the cell membrane.</text>
</comment>
<comment type="activity regulation">
    <text evidence="1">The antimicrobial activity of BAC79 was completely lost after treatment with enzymes trypsin, pepsin, proteinase-K, and carboxypeptidase, while there was no loss of activity with either amylase or lipase.</text>
</comment>
<comment type="biophysicochemical properties">
    <phDependence>
        <text evidence="1">Optimum pH is between 2 to 4. Active from pH 2 to 6.</text>
    </phDependence>
    <temperatureDependence>
        <text evidence="1">Thermostable. Retains activity up to 100 degrees Celsius, and when exposed to 121 degrees Celsius. Also retains activity after storage at 4 degrees Celsius for 4 months.</text>
    </temperatureDependence>
</comment>
<dbReference type="SMR" id="C0HLU4"/>
<dbReference type="GO" id="GO:0050829">
    <property type="term" value="P:defense response to Gram-negative bacterium"/>
    <property type="evidence" value="ECO:0000314"/>
    <property type="project" value="UniProtKB"/>
</dbReference>
<dbReference type="GO" id="GO:0050830">
    <property type="term" value="P:defense response to Gram-positive bacterium"/>
    <property type="evidence" value="ECO:0000314"/>
    <property type="project" value="UniProtKB"/>
</dbReference>
<dbReference type="GO" id="GO:0051673">
    <property type="term" value="P:disruption of plasma membrane integrity in another organism"/>
    <property type="evidence" value="ECO:0000314"/>
    <property type="project" value="UniProtKB"/>
</dbReference>
<dbReference type="GO" id="GO:0031640">
    <property type="term" value="P:killing of cells of another organism"/>
    <property type="evidence" value="ECO:0007669"/>
    <property type="project" value="UniProtKB-KW"/>
</dbReference>
<proteinExistence type="evidence at protein level"/>
<feature type="chain" id="PRO_0000454657" description="Bacteriocin BAC79">
    <location>
        <begin position="1"/>
        <end position="38"/>
    </location>
</feature>
<feature type="non-consecutive residues" evidence="2">
    <location>
        <begin position="8"/>
        <end position="9"/>
    </location>
</feature>
<feature type="non-consecutive residues" evidence="2">
    <location>
        <begin position="19"/>
        <end position="20"/>
    </location>
</feature>
<feature type="non-terminal residue" evidence="2">
    <location>
        <position position="1"/>
    </location>
</feature>
<feature type="non-terminal residue" evidence="2">
    <location>
        <position position="38"/>
    </location>
</feature>
<sequence length="38" mass="4264">AIAVELARDVFEAIQTLSRGSVFQDMPLVSNKELMDLR</sequence>
<accession>C0HLU4</accession>
<keyword id="KW-0044">Antibiotic</keyword>
<keyword id="KW-0929">Antimicrobial</keyword>
<keyword id="KW-0078">Bacteriocin</keyword>
<keyword id="KW-0903">Direct protein sequencing</keyword>